<proteinExistence type="inferred from homology"/>
<gene>
    <name evidence="1" type="primary">uppP</name>
    <name type="ordered locus">Dtpsy_1072</name>
</gene>
<organism>
    <name type="scientific">Acidovorax ebreus (strain TPSY)</name>
    <name type="common">Diaphorobacter sp. (strain TPSY)</name>
    <dbReference type="NCBI Taxonomy" id="535289"/>
    <lineage>
        <taxon>Bacteria</taxon>
        <taxon>Pseudomonadati</taxon>
        <taxon>Pseudomonadota</taxon>
        <taxon>Betaproteobacteria</taxon>
        <taxon>Burkholderiales</taxon>
        <taxon>Comamonadaceae</taxon>
        <taxon>Diaphorobacter</taxon>
    </lineage>
</organism>
<feature type="chain" id="PRO_1000148811" description="Undecaprenyl-diphosphatase">
    <location>
        <begin position="1"/>
        <end position="274"/>
    </location>
</feature>
<feature type="transmembrane region" description="Helical" evidence="1">
    <location>
        <begin position="44"/>
        <end position="64"/>
    </location>
</feature>
<feature type="transmembrane region" description="Helical" evidence="1">
    <location>
        <begin position="85"/>
        <end position="105"/>
    </location>
</feature>
<feature type="transmembrane region" description="Helical" evidence="1">
    <location>
        <begin position="109"/>
        <end position="129"/>
    </location>
</feature>
<feature type="transmembrane region" description="Helical" evidence="1">
    <location>
        <begin position="185"/>
        <end position="205"/>
    </location>
</feature>
<feature type="transmembrane region" description="Helical" evidence="1">
    <location>
        <begin position="215"/>
        <end position="235"/>
    </location>
</feature>
<feature type="transmembrane region" description="Helical" evidence="1">
    <location>
        <begin position="250"/>
        <end position="270"/>
    </location>
</feature>
<comment type="function">
    <text evidence="1">Catalyzes the dephosphorylation of undecaprenyl diphosphate (UPP). Confers resistance to bacitracin.</text>
</comment>
<comment type="catalytic activity">
    <reaction evidence="1">
        <text>di-trans,octa-cis-undecaprenyl diphosphate + H2O = di-trans,octa-cis-undecaprenyl phosphate + phosphate + H(+)</text>
        <dbReference type="Rhea" id="RHEA:28094"/>
        <dbReference type="ChEBI" id="CHEBI:15377"/>
        <dbReference type="ChEBI" id="CHEBI:15378"/>
        <dbReference type="ChEBI" id="CHEBI:43474"/>
        <dbReference type="ChEBI" id="CHEBI:58405"/>
        <dbReference type="ChEBI" id="CHEBI:60392"/>
        <dbReference type="EC" id="3.6.1.27"/>
    </reaction>
</comment>
<comment type="subcellular location">
    <subcellularLocation>
        <location evidence="1">Cell inner membrane</location>
        <topology evidence="1">Multi-pass membrane protein</topology>
    </subcellularLocation>
</comment>
<comment type="miscellaneous">
    <text>Bacitracin is thought to be involved in the inhibition of peptidoglycan synthesis by sequestering undecaprenyl diphosphate, thereby reducing the pool of lipid carrier available.</text>
</comment>
<comment type="similarity">
    <text evidence="1">Belongs to the UppP family.</text>
</comment>
<evidence type="ECO:0000255" key="1">
    <source>
        <dbReference type="HAMAP-Rule" id="MF_01006"/>
    </source>
</evidence>
<reference key="1">
    <citation type="submission" date="2009-01" db="EMBL/GenBank/DDBJ databases">
        <title>Complete sequence of Diaphorobacter sp. TPSY.</title>
        <authorList>
            <consortium name="US DOE Joint Genome Institute"/>
            <person name="Lucas S."/>
            <person name="Copeland A."/>
            <person name="Lapidus A."/>
            <person name="Glavina del Rio T."/>
            <person name="Tice H."/>
            <person name="Bruce D."/>
            <person name="Goodwin L."/>
            <person name="Pitluck S."/>
            <person name="Chertkov O."/>
            <person name="Brettin T."/>
            <person name="Detter J.C."/>
            <person name="Han C."/>
            <person name="Larimer F."/>
            <person name="Land M."/>
            <person name="Hauser L."/>
            <person name="Kyrpides N."/>
            <person name="Mikhailova N."/>
            <person name="Coates J.D."/>
        </authorList>
    </citation>
    <scope>NUCLEOTIDE SEQUENCE [LARGE SCALE GENOMIC DNA]</scope>
    <source>
        <strain>TPSY</strain>
    </source>
</reference>
<sequence length="274" mass="29649">MDTLLLLKAAIMGVVEGLTEFLPISSTGHLILAGSLLGFDDAKAKVFDIAIQTGAIFAVILVYWQRIRATLVALPTERQARRFALNVLIGFLPAVLLGLLLGKAIKAHLFTPVVVASTFILGGFVILWAERRQQAAVRIHAVDDMTPLDALKVGLVQCLAMVPGTSRSGATIIGGMLLGLSRKAATDYSFFLAIPTLIGAGVYSLYKERALLSAADIPLFAVGLVFSFISAWLCVRWLLRYISSHSFVPFAWYRIAFGLVVLVTAWSGLVTWAE</sequence>
<protein>
    <recommendedName>
        <fullName evidence="1">Undecaprenyl-diphosphatase</fullName>
        <ecNumber evidence="1">3.6.1.27</ecNumber>
    </recommendedName>
    <alternativeName>
        <fullName evidence="1">Bacitracin resistance protein</fullName>
    </alternativeName>
    <alternativeName>
        <fullName evidence="1">Undecaprenyl pyrophosphate phosphatase</fullName>
    </alternativeName>
</protein>
<accession>B9MFI6</accession>
<name>UPPP_ACIET</name>
<keyword id="KW-0046">Antibiotic resistance</keyword>
<keyword id="KW-0997">Cell inner membrane</keyword>
<keyword id="KW-1003">Cell membrane</keyword>
<keyword id="KW-0133">Cell shape</keyword>
<keyword id="KW-0961">Cell wall biogenesis/degradation</keyword>
<keyword id="KW-0378">Hydrolase</keyword>
<keyword id="KW-0472">Membrane</keyword>
<keyword id="KW-0573">Peptidoglycan synthesis</keyword>
<keyword id="KW-1185">Reference proteome</keyword>
<keyword id="KW-0812">Transmembrane</keyword>
<keyword id="KW-1133">Transmembrane helix</keyword>
<dbReference type="EC" id="3.6.1.27" evidence="1"/>
<dbReference type="EMBL" id="CP001392">
    <property type="protein sequence ID" value="ACM32549.1"/>
    <property type="molecule type" value="Genomic_DNA"/>
</dbReference>
<dbReference type="RefSeq" id="WP_015912772.1">
    <property type="nucleotide sequence ID" value="NC_011992.1"/>
</dbReference>
<dbReference type="SMR" id="B9MFI6"/>
<dbReference type="KEGG" id="dia:Dtpsy_1072"/>
<dbReference type="eggNOG" id="COG1968">
    <property type="taxonomic scope" value="Bacteria"/>
</dbReference>
<dbReference type="HOGENOM" id="CLU_060296_2_0_4"/>
<dbReference type="Proteomes" id="UP000000450">
    <property type="component" value="Chromosome"/>
</dbReference>
<dbReference type="GO" id="GO:0005886">
    <property type="term" value="C:plasma membrane"/>
    <property type="evidence" value="ECO:0007669"/>
    <property type="project" value="UniProtKB-SubCell"/>
</dbReference>
<dbReference type="GO" id="GO:0050380">
    <property type="term" value="F:undecaprenyl-diphosphatase activity"/>
    <property type="evidence" value="ECO:0007669"/>
    <property type="project" value="UniProtKB-UniRule"/>
</dbReference>
<dbReference type="GO" id="GO:0071555">
    <property type="term" value="P:cell wall organization"/>
    <property type="evidence" value="ECO:0007669"/>
    <property type="project" value="UniProtKB-KW"/>
</dbReference>
<dbReference type="GO" id="GO:0009252">
    <property type="term" value="P:peptidoglycan biosynthetic process"/>
    <property type="evidence" value="ECO:0007669"/>
    <property type="project" value="UniProtKB-KW"/>
</dbReference>
<dbReference type="GO" id="GO:0008360">
    <property type="term" value="P:regulation of cell shape"/>
    <property type="evidence" value="ECO:0007669"/>
    <property type="project" value="UniProtKB-KW"/>
</dbReference>
<dbReference type="GO" id="GO:0046677">
    <property type="term" value="P:response to antibiotic"/>
    <property type="evidence" value="ECO:0007669"/>
    <property type="project" value="UniProtKB-UniRule"/>
</dbReference>
<dbReference type="HAMAP" id="MF_01006">
    <property type="entry name" value="Undec_diphosphatase"/>
    <property type="match status" value="1"/>
</dbReference>
<dbReference type="InterPro" id="IPR003824">
    <property type="entry name" value="UppP"/>
</dbReference>
<dbReference type="NCBIfam" id="NF001389">
    <property type="entry name" value="PRK00281.1-2"/>
    <property type="match status" value="1"/>
</dbReference>
<dbReference type="NCBIfam" id="NF001390">
    <property type="entry name" value="PRK00281.1-4"/>
    <property type="match status" value="1"/>
</dbReference>
<dbReference type="NCBIfam" id="TIGR00753">
    <property type="entry name" value="undec_PP_bacA"/>
    <property type="match status" value="1"/>
</dbReference>
<dbReference type="PANTHER" id="PTHR30622">
    <property type="entry name" value="UNDECAPRENYL-DIPHOSPHATASE"/>
    <property type="match status" value="1"/>
</dbReference>
<dbReference type="PANTHER" id="PTHR30622:SF3">
    <property type="entry name" value="UNDECAPRENYL-DIPHOSPHATASE"/>
    <property type="match status" value="1"/>
</dbReference>
<dbReference type="Pfam" id="PF02673">
    <property type="entry name" value="BacA"/>
    <property type="match status" value="1"/>
</dbReference>